<proteinExistence type="inferred from homology"/>
<reference key="1">
    <citation type="submission" date="2002-12" db="EMBL/GenBank/DDBJ databases">
        <title>Complete genome sequence of Vibrio vulnificus CMCP6.</title>
        <authorList>
            <person name="Rhee J.H."/>
            <person name="Kim S.Y."/>
            <person name="Chung S.S."/>
            <person name="Kim J.J."/>
            <person name="Moon Y.H."/>
            <person name="Jeong H."/>
            <person name="Choy H.E."/>
        </authorList>
    </citation>
    <scope>NUCLEOTIDE SEQUENCE [LARGE SCALE GENOMIC DNA]</scope>
    <source>
        <strain>CMCP6</strain>
    </source>
</reference>
<name>SPRT_VIBVU</name>
<protein>
    <recommendedName>
        <fullName>Protein SprT</fullName>
    </recommendedName>
</protein>
<comment type="cofactor">
    <cofactor evidence="2">
        <name>Zn(2+)</name>
        <dbReference type="ChEBI" id="CHEBI:29105"/>
    </cofactor>
    <text evidence="2">Binds 1 zinc ion.</text>
</comment>
<comment type="subcellular location">
    <subcellularLocation>
        <location evidence="2">Cytoplasm</location>
    </subcellularLocation>
</comment>
<comment type="similarity">
    <text evidence="2">Belongs to the SprT family.</text>
</comment>
<evidence type="ECO:0000255" key="1"/>
<evidence type="ECO:0000305" key="2"/>
<feature type="chain" id="PRO_0000213282" description="Protein SprT">
    <location>
        <begin position="1"/>
        <end position="168"/>
    </location>
</feature>
<feature type="domain" description="SprT-like">
    <location>
        <begin position="18"/>
        <end position="161"/>
    </location>
</feature>
<feature type="active site" evidence="1">
    <location>
        <position position="77"/>
    </location>
</feature>
<feature type="binding site" evidence="1">
    <location>
        <position position="76"/>
    </location>
    <ligand>
        <name>Zn(2+)</name>
        <dbReference type="ChEBI" id="CHEBI:29105"/>
    </ligand>
</feature>
<feature type="binding site" evidence="1">
    <location>
        <position position="80"/>
    </location>
    <ligand>
        <name>Zn(2+)</name>
        <dbReference type="ChEBI" id="CHEBI:29105"/>
    </ligand>
</feature>
<organism>
    <name type="scientific">Vibrio vulnificus (strain CMCP6)</name>
    <dbReference type="NCBI Taxonomy" id="216895"/>
    <lineage>
        <taxon>Bacteria</taxon>
        <taxon>Pseudomonadati</taxon>
        <taxon>Pseudomonadota</taxon>
        <taxon>Gammaproteobacteria</taxon>
        <taxon>Vibrionales</taxon>
        <taxon>Vibrionaceae</taxon>
        <taxon>Vibrio</taxon>
    </lineage>
</organism>
<sequence>MKKIEFELHYQAQKALHACIDKANRYFQRQFPMPLLSYQLRGKAAGKAYLQLNQIRLNPILFKENKTAFLEEVIPHEVAHLLTYQLYGRVKPHGAEWQSIMQGVFLLPANTTHQFAVASVQGKTFQYRCQCREFPLTIRRHNKVLRNEASYTCQKCRQTLIFTGIQLS</sequence>
<accession>Q8DCA5</accession>
<keyword id="KW-0963">Cytoplasm</keyword>
<keyword id="KW-0479">Metal-binding</keyword>
<keyword id="KW-0862">Zinc</keyword>
<dbReference type="EMBL" id="AE016795">
    <property type="protein sequence ID" value="AAO09960.1"/>
    <property type="molecule type" value="Genomic_DNA"/>
</dbReference>
<dbReference type="RefSeq" id="WP_011079470.1">
    <property type="nucleotide sequence ID" value="NC_004459.3"/>
</dbReference>
<dbReference type="KEGG" id="vvu:VV1_1534"/>
<dbReference type="HOGENOM" id="CLU_113336_0_1_6"/>
<dbReference type="Proteomes" id="UP000002275">
    <property type="component" value="Chromosome 1"/>
</dbReference>
<dbReference type="GO" id="GO:0005737">
    <property type="term" value="C:cytoplasm"/>
    <property type="evidence" value="ECO:0007669"/>
    <property type="project" value="UniProtKB-SubCell"/>
</dbReference>
<dbReference type="GO" id="GO:0008270">
    <property type="term" value="F:zinc ion binding"/>
    <property type="evidence" value="ECO:0007669"/>
    <property type="project" value="UniProtKB-UniRule"/>
</dbReference>
<dbReference type="GO" id="GO:0006950">
    <property type="term" value="P:response to stress"/>
    <property type="evidence" value="ECO:0007669"/>
    <property type="project" value="UniProtKB-ARBA"/>
</dbReference>
<dbReference type="HAMAP" id="MF_00746">
    <property type="entry name" value="SprT"/>
    <property type="match status" value="1"/>
</dbReference>
<dbReference type="InterPro" id="IPR006640">
    <property type="entry name" value="SprT-like_domain"/>
</dbReference>
<dbReference type="InterPro" id="IPR035240">
    <property type="entry name" value="SprT_Zn_ribbon"/>
</dbReference>
<dbReference type="InterPro" id="IPR023483">
    <property type="entry name" value="Uncharacterised_SprT"/>
</dbReference>
<dbReference type="NCBIfam" id="NF003421">
    <property type="entry name" value="PRK04860.1"/>
    <property type="match status" value="1"/>
</dbReference>
<dbReference type="PANTHER" id="PTHR38773">
    <property type="entry name" value="PROTEIN SPRT"/>
    <property type="match status" value="1"/>
</dbReference>
<dbReference type="PANTHER" id="PTHR38773:SF1">
    <property type="entry name" value="PROTEIN SPRT"/>
    <property type="match status" value="1"/>
</dbReference>
<dbReference type="Pfam" id="PF10263">
    <property type="entry name" value="SprT-like"/>
    <property type="match status" value="1"/>
</dbReference>
<dbReference type="Pfam" id="PF17283">
    <property type="entry name" value="Zn_ribbon_SprT"/>
    <property type="match status" value="1"/>
</dbReference>
<dbReference type="SMART" id="SM00731">
    <property type="entry name" value="SprT"/>
    <property type="match status" value="1"/>
</dbReference>
<dbReference type="PROSITE" id="PS00142">
    <property type="entry name" value="ZINC_PROTEASE"/>
    <property type="match status" value="1"/>
</dbReference>
<gene>
    <name type="primary">sprT</name>
    <name type="ordered locus">VV1_1534</name>
</gene>